<organism>
    <name type="scientific">Mus musculus</name>
    <name type="common">Mouse</name>
    <dbReference type="NCBI Taxonomy" id="10090"/>
    <lineage>
        <taxon>Eukaryota</taxon>
        <taxon>Metazoa</taxon>
        <taxon>Chordata</taxon>
        <taxon>Craniata</taxon>
        <taxon>Vertebrata</taxon>
        <taxon>Euteleostomi</taxon>
        <taxon>Mammalia</taxon>
        <taxon>Eutheria</taxon>
        <taxon>Euarchontoglires</taxon>
        <taxon>Glires</taxon>
        <taxon>Rodentia</taxon>
        <taxon>Myomorpha</taxon>
        <taxon>Muroidea</taxon>
        <taxon>Muridae</taxon>
        <taxon>Murinae</taxon>
        <taxon>Mus</taxon>
        <taxon>Mus</taxon>
    </lineage>
</organism>
<keyword id="KW-0002">3D-structure</keyword>
<keyword id="KW-0025">Alternative splicing</keyword>
<keyword id="KW-1015">Disulfide bond</keyword>
<keyword id="KW-0325">Glycoprotein</keyword>
<keyword id="KW-0378">Hydrolase</keyword>
<keyword id="KW-0393">Immunoglobulin domain</keyword>
<keyword id="KW-0472">Membrane</keyword>
<keyword id="KW-0904">Protein phosphatase</keyword>
<keyword id="KW-0675">Receptor</keyword>
<keyword id="KW-1185">Reference proteome</keyword>
<keyword id="KW-0677">Repeat</keyword>
<keyword id="KW-0732">Signal</keyword>
<keyword id="KW-0812">Transmembrane</keyword>
<keyword id="KW-1133">Transmembrane helix</keyword>
<sequence length="1912" mass="214410">MVPVARPLSLLLTFFLCACAETPPRFTRTPVDQTGVSGGVASFICQATGDPRPKIVWNKKGKKVSNQRFEVIEFDDGSGSVLRIQPLRTPRDEAIYECVASNNVGEISVSTRLTVLREDQIPRGFPTIDMGPQLKVVERTRTATMLCAASGNPDPEITWFKDFLPVDTSNNNGRIKQLRSESIGGTPIRGALQIEQSEESDQGKYECVATNSAGTRYSAPANLYVRELREVRRVPPRFSIPPTNHEIMPGGSVNITCVAVGSPMPYVKWMLGAEDLTPEDDMPIGRNVLELNDVRQSANYTCVAMSTLGVIEAIAQITVKALPKPPGTPVVTESTATSITLTWDSGNPEPVSYYIIQHKPKNSEEPYKEIDGIATTRYSVAGLSPYSDYEFRVVAVNNIGRGPASEPVLTQTSEQAPSSAPRDVQARMLSSTTILVQWKEPEEPNGQIQGYRVYYTMDPTQHVNNWMKHNVADSQITTIGNLVPQKTYSVKVLAFTSIGDGPLSSDIQVITQTGVPGQPLNFKAEPESETSILLSWTPPRSDTIASYELVYRDGDQGEEQRITIEPGTSYRLQGLKPNSLYYFRLSARSPQGLGASTAEISARTMQSKPSAPPQDISCTSPSSTSILVSWQPPPVEKQNGIITEYSLKYAAVDGEDFKPHEILGIPSDTTKYLLEQLEKWTEYRITVTAHTDVGPGPESLSVLIRTDEDVPSGPPRKVEVEAVNATAVKVSWRSPVPNKQHGQIRGYQVHYVKMENGEPKGQPMLKDVMLADAQWEFDDTTEHDMIISGLQPETSYSLTVTAYTTKGDGARSKPKLVSTTGAVPGKPRLVINHTQMNTALIQWHPPVDTFGPLQGYRLKFGRKDMEPLTTLEFSEKEDHFTATDIHKGASYVFRLSARNKVGFGEEMVKEISVPEEIPTGFPQNLHSEGTTSTSVQLSWQPPVLAERNGVITKYTLLYRDINVPLLPMEHLIVPADTSMTLTGLKSDTTYDVKVRAHTSKGPGPYSPSVQFRTLPVDQVFAKNFHVKAVMKTSVLLSWEIPENYNSAMPFKILYDDGKMVEEVDGRATQKLIVNLKPEKSYSFVLTNRGNSAGGLQHRVTAKTAPDVLRTKPAFIGKTNLDGMITVQLPDVPANENIKGYYIIIVPLKKSRGKFIKPWESPDEMELDELLKEISRKRRSIRYGREVELKPYIAAHFDVLPTEFTLGDDKHYGGFTNKQLQSGQEYVFFVLAVMDHAESKMYATSPYSDPVVSMDLDPQPITDEEEGLIWVVGPVLAVVFIICIVIAILLYKRKRAESESRKSSLPNSKEVPSHHPTDPVELRRLNFQTPGMASHPPIPILELADHIERLKANDNLKFSQEYESIDPGQQFTWEHSNLEVNKPKNRYANVIAYDHSRVLLSAIEGIPGSDYVNANYIDGYRKQNAYIATQGSLPETFGDFWRMIWEQRSATVVMMTKLEERSRVKCDQYWPSRGTETHGLVQVTLLDTVELATYCVRTFALYKNGSSEKREVRQFQFTAWPDHGVPEHPTPFLAFLRRVKTCNPPDAGPMVVHCSAGVGRTGCFIVIDAMLERIKHEKTVDIYGHVTLMRAQRNYMVQTEDQYIFIHDALLEAVTCGNTEVPARNLYAYIQKLTQIETGENVTGMELEFKRLASSKAHTSRFISANLPCNKFKNRLVNIMPYESTRVCLQPIRGVEGSDYINASFLDGYRQQKAYIATQGPLAETTEDFWRMLWEHNSTIVVMLTKLREMGREKCHQYWPAERSARYQYFVVDPMAEYNMPQYILREFKVTDARDGQSRTVRQFQFTDWPEQGVPKSGEGFIDFIGQVHKTKEQFGQDGPISVHCSAGVGRTGVFITLSIVLERMRYEGVVDIFQTVKMLRTQRPAMVQTEDQYQFCYRAALEYLGSFDHYAT</sequence>
<proteinExistence type="evidence at protein level"/>
<evidence type="ECO:0000250" key="1"/>
<evidence type="ECO:0000250" key="2">
    <source>
        <dbReference type="UniProtKB" id="P23468"/>
    </source>
</evidence>
<evidence type="ECO:0000255" key="3"/>
<evidence type="ECO:0000255" key="4">
    <source>
        <dbReference type="PROSITE-ProRule" id="PRU00114"/>
    </source>
</evidence>
<evidence type="ECO:0000255" key="5">
    <source>
        <dbReference type="PROSITE-ProRule" id="PRU00160"/>
    </source>
</evidence>
<evidence type="ECO:0000255" key="6">
    <source>
        <dbReference type="PROSITE-ProRule" id="PRU00316"/>
    </source>
</evidence>
<evidence type="ECO:0000255" key="7">
    <source>
        <dbReference type="PROSITE-ProRule" id="PRU10044"/>
    </source>
</evidence>
<evidence type="ECO:0000256" key="8">
    <source>
        <dbReference type="SAM" id="MobiDB-lite"/>
    </source>
</evidence>
<evidence type="ECO:0000269" key="9">
    <source>
    </source>
</evidence>
<evidence type="ECO:0000269" key="10">
    <source>
    </source>
</evidence>
<evidence type="ECO:0000269" key="11">
    <source>
    </source>
</evidence>
<evidence type="ECO:0000303" key="12">
    <source>
    </source>
</evidence>
<evidence type="ECO:0000303" key="13">
    <source>
    </source>
</evidence>
<evidence type="ECO:0000305" key="14"/>
<evidence type="ECO:0007744" key="15">
    <source>
        <dbReference type="PDB" id="4Y61"/>
    </source>
</evidence>
<evidence type="ECO:0007744" key="16">
    <source>
        <dbReference type="PDB" id="4YFD"/>
    </source>
</evidence>
<evidence type="ECO:0007744" key="17">
    <source>
        <dbReference type="PDB" id="4YFE"/>
    </source>
</evidence>
<evidence type="ECO:0007744" key="18">
    <source>
        <dbReference type="PDB" id="4YFG"/>
    </source>
</evidence>
<evidence type="ECO:0007744" key="19">
    <source>
        <dbReference type="PDB" id="4YH7"/>
    </source>
</evidence>
<evidence type="ECO:0007744" key="20">
    <source>
        <dbReference type="PDB" id="5Y32"/>
    </source>
</evidence>
<evidence type="ECO:0007829" key="21">
    <source>
        <dbReference type="PDB" id="4YFE"/>
    </source>
</evidence>
<evidence type="ECO:0007829" key="22">
    <source>
        <dbReference type="PDB" id="5XWU"/>
    </source>
</evidence>
<evidence type="ECO:0007829" key="23">
    <source>
        <dbReference type="PDB" id="5Y32"/>
    </source>
</evidence>
<evidence type="ECO:0007829" key="24">
    <source>
        <dbReference type="PDB" id="6KIP"/>
    </source>
</evidence>
<reference key="1">
    <citation type="journal article" date="1993" name="Mol. Cell. Biol.">
        <title>MPTP delta, a putative murine homolog of HPTP delta, is expressed in specialized regions of the brain and in the B-cell lineage.</title>
        <authorList>
            <person name="Mizuno K."/>
            <person name="Hasegawa K."/>
            <person name="Katagiri T."/>
            <person name="Ogimoto M."/>
            <person name="Ichikawa T."/>
            <person name="Yakura H."/>
        </authorList>
    </citation>
    <scope>NUCLEOTIDE SEQUENCE [MRNA] (ISOFORM A)</scope>
    <scope>NUCLEOTIDE SEQUENCE [MRNA] OF 1-224 (ISOFORMS C/H/I)</scope>
    <scope>NUCLEOTIDE SEQUENCE [MRNA] OF 606-1018 (ISOFORMS B/C)</scope>
    <scope>ALTERNATIVE SPLICING (ISOFORMS A; B AND C)</scope>
    <source>
        <strain>BALB/cJ</strain>
        <tissue>Brain</tissue>
    </source>
</reference>
<reference key="2">
    <citation type="journal article" date="2002" name="J. Neurosci.">
        <title>Congenic mapping of alcohol and pentobarbital withdrawal liability loci to a &lt;1 centimorgan interval of murine chromosome 4: identification of Mpdz as a candidate gene.</title>
        <authorList>
            <person name="Fehr C."/>
            <person name="Shirley R.L."/>
            <person name="Belknap J.K."/>
            <person name="Crabbe J.C."/>
            <person name="Buck K.J."/>
        </authorList>
    </citation>
    <scope>NUCLEOTIDE SEQUENCE [MRNA] (ISOFORM L)</scope>
    <source>
        <strain>C57BL/6J</strain>
        <strain>DBA/2J</strain>
        <tissue>Brain</tissue>
    </source>
</reference>
<reference key="3">
    <citation type="journal article" date="2009" name="PLoS Biol.">
        <title>Lineage-specific biology revealed by a finished genome assembly of the mouse.</title>
        <authorList>
            <person name="Church D.M."/>
            <person name="Goodstadt L."/>
            <person name="Hillier L.W."/>
            <person name="Zody M.C."/>
            <person name="Goldstein S."/>
            <person name="She X."/>
            <person name="Bult C.J."/>
            <person name="Agarwala R."/>
            <person name="Cherry J.L."/>
            <person name="DiCuccio M."/>
            <person name="Hlavina W."/>
            <person name="Kapustin Y."/>
            <person name="Meric P."/>
            <person name="Maglott D."/>
            <person name="Birtle Z."/>
            <person name="Marques A.C."/>
            <person name="Graves T."/>
            <person name="Zhou S."/>
            <person name="Teague B."/>
            <person name="Potamousis K."/>
            <person name="Churas C."/>
            <person name="Place M."/>
            <person name="Herschleb J."/>
            <person name="Runnheim R."/>
            <person name="Forrest D."/>
            <person name="Amos-Landgraf J."/>
            <person name="Schwartz D.C."/>
            <person name="Cheng Z."/>
            <person name="Lindblad-Toh K."/>
            <person name="Eichler E.E."/>
            <person name="Ponting C.P."/>
        </authorList>
    </citation>
    <scope>NUCLEOTIDE SEQUENCE [LARGE SCALE GENOMIC DNA]</scope>
    <source>
        <strain>C57BL/6J</strain>
    </source>
</reference>
<reference key="4">
    <citation type="journal article" date="1995" name="Biochem. J.">
        <title>A novel receptor-type protein tyrosine phosphatase with a single catalytic domain is specifically expressed in mouse brain.</title>
        <authorList>
            <person name="Hendriks W."/>
            <person name="Schepens J."/>
            <person name="Brugman C."/>
            <person name="Zeeuwen P."/>
            <person name="Wieringa B."/>
        </authorList>
    </citation>
    <scope>NUCLEOTIDE SEQUENCE [MRNA] OF 1446-1551</scope>
    <source>
        <strain>BALB/cJ</strain>
        <tissue>Brain</tissue>
    </source>
</reference>
<reference key="5">
    <citation type="journal article" date="2010" name="Cell">
        <title>A tissue-specific atlas of mouse protein phosphorylation and expression.</title>
        <authorList>
            <person name="Huttlin E.L."/>
            <person name="Jedrychowski M.P."/>
            <person name="Elias J.E."/>
            <person name="Goswami T."/>
            <person name="Rad R."/>
            <person name="Beausoleil S.A."/>
            <person name="Villen J."/>
            <person name="Haas W."/>
            <person name="Sowa M.E."/>
            <person name="Gygi S.P."/>
        </authorList>
    </citation>
    <scope>IDENTIFICATION BY MASS SPECTROMETRY [LARGE SCALE ANALYSIS]</scope>
    <source>
        <tissue>Brain</tissue>
        <tissue>Brown adipose tissue</tissue>
        <tissue>Kidney</tissue>
        <tissue>Liver</tissue>
        <tissue>Lung</tissue>
    </source>
</reference>
<reference key="6">
    <citation type="journal article" date="2011" name="J. Neurosci.">
        <title>IL-1 receptor accessory protein-like 1 associated with mental retardation and autism mediates synapse formation by trans-synaptic interaction with protein tyrosine phosphatase delta.</title>
        <authorList>
            <person name="Yoshida T."/>
            <person name="Yasumura M."/>
            <person name="Uemura T."/>
            <person name="Lee S.J."/>
            <person name="Ra M."/>
            <person name="Taguchi R."/>
            <person name="Iwakura Y."/>
            <person name="Mishina M."/>
        </authorList>
    </citation>
    <scope>INTERACTION WITH IL1RAPL1</scope>
    <scope>ALTERNATIVE SPLICING (ISOFORMS D/E/F/G/H/I/J/K)</scope>
    <scope>IDENTIFICATION BY MASS SPECTROMETRY</scope>
</reference>
<reference evidence="16 17 18 19 20" key="7">
    <citation type="journal article" date="2015" name="Nat. Commun.">
        <title>Mechanisms of splicing-dependent trans-synaptic adhesion by PTPdelta-IL1RAPL1/IL-1RAcP for synaptic differentiation.</title>
        <authorList>
            <person name="Yamagata A."/>
            <person name="Yoshida T."/>
            <person name="Sato Y."/>
            <person name="Goto-Ito S."/>
            <person name="Uemura T."/>
            <person name="Maeda A."/>
            <person name="Shiroshima T."/>
            <person name="Iwasawa-Okamoto S."/>
            <person name="Mori H."/>
            <person name="Mishina M."/>
            <person name="Fukai S."/>
        </authorList>
    </citation>
    <scope>X-RAY CRYSTALLOGRAPHY (1.97 ANGSTROMS) OF 21-1265 IN COMPLEXES WITH IL1RAPL1 AND IL1RAP</scope>
    <scope>DISULFIDE BONDS</scope>
    <scope>GLYCOSYLATION AT ASN-254 AND ASN-299</scope>
    <scope>MUTAGENESIS OF ARG-68; ARG-189; TYR-266 AND GLU-279</scope>
    <scope>FUNCTION</scope>
    <scope>REGION</scope>
    <scope>SITE</scope>
    <scope>INTERACTION WITH IL1RAPL1 AND IL1RAP</scope>
</reference>
<reference evidence="15" key="8">
    <citation type="journal article" date="2015" name="Sci. Rep.">
        <title>Structure of Slitrk2-PTPdelta complex reveals mechanisms for splicing-dependent trans-synaptic adhesion.</title>
        <authorList>
            <person name="Yamagata A."/>
            <person name="Sato Y."/>
            <person name="Goto-Ito S."/>
            <person name="Uemura T."/>
            <person name="Maeda A."/>
            <person name="Shiroshima T."/>
            <person name="Yoshida T."/>
            <person name="Fukai S."/>
        </authorList>
    </citation>
    <scope>X-RAY CRYSTALLOGRAPHY (3.36 ANGSTROMS) OF 21-411 IN COMPLEX WITH SLITRK2</scope>
    <scope>DISULFIDE BONDS</scope>
    <scope>INTERACTION WITH SLITRK2 AND SLITRK4</scope>
    <scope>REGION</scope>
    <scope>GLYCOSYLATION AT ASN-254 AND ASN-299</scope>
    <scope>MUTAGENESIS OF ARG-229 AND TYR-266</scope>
    <scope>FUNCTION</scope>
</reference>
<name>PTPRD_MOUSE</name>
<accession>Q64487</accession>
<accession>G3X9S7</accession>
<accession>Q64486</accession>
<accession>Q64488</accession>
<accession>Q64495</accession>
<accession>Q8VBV0</accession>
<gene>
    <name type="primary">Ptprd</name>
</gene>
<protein>
    <recommendedName>
        <fullName>Receptor-type tyrosine-protein phosphatase delta</fullName>
        <shortName>Protein-tyrosine phosphatase delta</shortName>
        <shortName>R-PTP-delta</shortName>
        <ecNumber>3.1.3.48</ecNumber>
    </recommendedName>
</protein>
<feature type="signal peptide" evidence="3">
    <location>
        <begin position="1"/>
        <end position="20"/>
    </location>
</feature>
<feature type="chain" id="PRO_0000025438" description="Receptor-type tyrosine-protein phosphatase delta">
    <location>
        <begin position="21"/>
        <end position="1912"/>
    </location>
</feature>
<feature type="topological domain" description="Extracellular" evidence="3">
    <location>
        <begin position="21"/>
        <end position="1266"/>
    </location>
</feature>
<feature type="transmembrane region" description="Helical" evidence="3">
    <location>
        <begin position="1267"/>
        <end position="1287"/>
    </location>
</feature>
<feature type="topological domain" description="Cytoplasmic" evidence="3">
    <location>
        <begin position="1288"/>
        <end position="1912"/>
    </location>
</feature>
<feature type="domain" description="Ig-like C2-type 1">
    <location>
        <begin position="24"/>
        <end position="114"/>
    </location>
</feature>
<feature type="domain" description="Ig-like C2-type 2">
    <location>
        <begin position="126"/>
        <end position="224"/>
    </location>
</feature>
<feature type="domain" description="Ig-like C2-type 3">
    <location>
        <begin position="236"/>
        <end position="318"/>
    </location>
</feature>
<feature type="domain" description="Fibronectin type-III 1" evidence="6">
    <location>
        <begin position="325"/>
        <end position="415"/>
    </location>
</feature>
<feature type="domain" description="Fibronectin type-III 2" evidence="6">
    <location>
        <begin position="420"/>
        <end position="516"/>
    </location>
</feature>
<feature type="domain" description="Fibronectin type-III 3" evidence="6">
    <location>
        <begin position="518"/>
        <end position="607"/>
    </location>
</feature>
<feature type="domain" description="Fibronectin type-III 4" evidence="6">
    <location>
        <begin position="612"/>
        <end position="709"/>
    </location>
</feature>
<feature type="domain" description="Fibronectin type-III 5" evidence="6">
    <location>
        <begin position="714"/>
        <end position="822"/>
    </location>
</feature>
<feature type="domain" description="Fibronectin type-III 6" evidence="6">
    <location>
        <begin position="823"/>
        <end position="916"/>
    </location>
</feature>
<feature type="domain" description="Fibronectin type-III 7" evidence="6">
    <location>
        <begin position="921"/>
        <end position="1016"/>
    </location>
</feature>
<feature type="domain" description="Fibronectin type-III 8" evidence="6">
    <location>
        <begin position="1020"/>
        <end position="1106"/>
    </location>
</feature>
<feature type="domain" description="Tyrosine-protein phosphatase 1" evidence="5">
    <location>
        <begin position="1357"/>
        <end position="1612"/>
    </location>
</feature>
<feature type="domain" description="Tyrosine-protein phosphatase 2" evidence="5">
    <location>
        <begin position="1644"/>
        <end position="1903"/>
    </location>
</feature>
<feature type="region of interest" description="Mini-exon peptide A9; sufficient for interaction with IL1RAPL1" evidence="9 10">
    <location>
        <begin position="181"/>
        <end position="189"/>
    </location>
</feature>
<feature type="region of interest" description="Mini-exon peptide B; required for interaction with SLITRK2 and in the function in pre-synaptic differentiation; Acts as an adjustable linker to control relative positions and orientations of the PTPRD second and third immunoglobilin domains for their simultaneous interactions with the first immunoglobilin domain of IL1RAPL1 and IL1RAP; Modulates affinity for IL1RAPL1 and IL1RAP" evidence="10 11">
    <location>
        <begin position="227"/>
        <end position="230"/>
    </location>
</feature>
<feature type="region of interest" description="Disordered" evidence="8">
    <location>
        <begin position="1298"/>
        <end position="1319"/>
    </location>
</feature>
<feature type="compositionally biased region" description="Basic and acidic residues" evidence="8">
    <location>
        <begin position="1310"/>
        <end position="1319"/>
    </location>
</feature>
<feature type="active site" description="Phosphocysteine intermediate" evidence="1">
    <location>
        <position position="1553"/>
    </location>
</feature>
<feature type="active site" description="Phosphocysteine intermediate" evidence="1">
    <location>
        <position position="1844"/>
    </location>
</feature>
<feature type="binding site" evidence="1">
    <location>
        <position position="1521"/>
    </location>
    <ligand>
        <name>substrate</name>
    </ligand>
</feature>
<feature type="binding site" evidence="1">
    <location>
        <begin position="1553"/>
        <end position="1559"/>
    </location>
    <ligand>
        <name>substrate</name>
    </ligand>
</feature>
<feature type="binding site" evidence="1">
    <location>
        <position position="1597"/>
    </location>
    <ligand>
        <name>substrate</name>
    </ligand>
</feature>
<feature type="site" description="Required for interaction with IL1RAP" evidence="10">
    <location>
        <position position="266"/>
    </location>
</feature>
<feature type="site" description="Cleavage" evidence="1">
    <location>
        <begin position="1181"/>
        <end position="1182"/>
    </location>
</feature>
<feature type="glycosylation site" description="N-linked (GlcNAc...) asparagine" evidence="3 10 11 15 16 18">
    <location>
        <position position="254"/>
    </location>
</feature>
<feature type="glycosylation site" description="N-linked (GlcNAc...) asparagine" evidence="3 10 11 15 16 18">
    <location>
        <position position="299"/>
    </location>
</feature>
<feature type="glycosylation site" description="N-linked (GlcNAc...) asparagine" evidence="3">
    <location>
        <position position="724"/>
    </location>
</feature>
<feature type="glycosylation site" description="N-linked (GlcNAc...) asparagine" evidence="3">
    <location>
        <position position="832"/>
    </location>
</feature>
<feature type="disulfide bond" evidence="4 10 11 15 16 18 19 20">
    <location>
        <begin position="45"/>
        <end position="98"/>
    </location>
</feature>
<feature type="disulfide bond" evidence="4 10 11 15 16 18 20">
    <location>
        <begin position="147"/>
        <end position="207"/>
    </location>
</feature>
<feature type="disulfide bond" evidence="4 10 11 15 16 18 19">
    <location>
        <begin position="257"/>
        <end position="302"/>
    </location>
</feature>
<feature type="splice variant" id="VSP_043545" description="In isoform A and isoform B." evidence="13">
    <original>M</original>
    <variation>MCLTSCFILASHMLSCDLVFVP</variation>
    <location>
        <position position="1"/>
    </location>
</feature>
<feature type="splice variant" id="VSP_043546" description="In isoform A and isoform B." evidence="13">
    <location>
        <begin position="2"/>
        <end position="230"/>
    </location>
</feature>
<feature type="splice variant" id="VSP_043547" description="In isoform J and isoform K." evidence="14">
    <location>
        <begin position="181"/>
        <end position="189"/>
    </location>
</feature>
<feature type="splice variant" id="VSP_043548" description="In isoform F and isoform G." evidence="14">
    <location>
        <begin position="181"/>
        <end position="183"/>
    </location>
</feature>
<feature type="splice variant" id="VSP_043549" description="In isoform C, isoform H and isoform I." evidence="14">
    <location>
        <begin position="184"/>
        <end position="189"/>
    </location>
</feature>
<feature type="splice variant" id="VSP_043550" description="In isoform C, isoform E, isoform G, isoform I and isoform K." evidence="14">
    <location>
        <begin position="227"/>
        <end position="230"/>
    </location>
</feature>
<feature type="splice variant" id="VSP_043551" description="In isoform A and isoform L." evidence="12 13">
    <location>
        <begin position="608"/>
        <end position="1018"/>
    </location>
</feature>
<feature type="splice variant" id="VSP_043552" description="In isoform B and isoform C." evidence="14">
    <location>
        <begin position="775"/>
        <end position="783"/>
    </location>
</feature>
<feature type="splice variant" id="VSP_043553" description="In isoform A and isoform L." evidence="12 13">
    <original>V</original>
    <variation>M</variation>
    <location>
        <position position="1019"/>
    </location>
</feature>
<feature type="mutagenesis site" description="Reduces affinity with IL1RAPL1. Reduces the synaptogenic activity to ~7%." evidence="10">
    <original>R</original>
    <variation>A</variation>
    <location>
        <position position="68"/>
    </location>
</feature>
<feature type="mutagenesis site" description="Decreases affinity for interaction with IL1RAPL1." evidence="10">
    <original>R</original>
    <variation>A</variation>
    <location>
        <position position="189"/>
    </location>
</feature>
<feature type="mutagenesis site" description="Abolishes interaction with SLITRK2." evidence="11">
    <original>R</original>
    <variation>E</variation>
    <location>
        <position position="229"/>
    </location>
</feature>
<feature type="mutagenesis site" description="No effect on interaction with SLITRK2. Decreases the affinity for IL1RAPL1. Abolishes interaction with IL1RAP." evidence="10 11">
    <original>Y</original>
    <variation>A</variation>
    <location>
        <position position="266"/>
    </location>
</feature>
<feature type="mutagenesis site" description="Decreases affinity for IL1RAP." evidence="10">
    <original>E</original>
    <variation>A</variation>
    <location>
        <position position="279"/>
    </location>
</feature>
<feature type="sequence conflict" description="In Ref. 1; BAA03004." evidence="14" ref="1">
    <original>A</original>
    <variation>R</variation>
    <location>
        <position position="5"/>
    </location>
</feature>
<feature type="sequence conflict" description="In Ref. 1; BAA03003." evidence="14" ref="1">
    <original>E</original>
    <variation>G</variation>
    <location>
        <position position="349"/>
    </location>
</feature>
<feature type="sequence conflict" description="In Ref. 1; BAA03003." evidence="14" ref="1">
    <original>A</original>
    <variation>T</variation>
    <location>
        <position position="416"/>
    </location>
</feature>
<feature type="sequence conflict" description="In Ref. 1; BAA03003." evidence="14" ref="1">
    <original>Y</original>
    <variation>D</variation>
    <location>
        <position position="551"/>
    </location>
</feature>
<feature type="sequence conflict" description="In Ref. 1; BAA03003." evidence="14" ref="1">
    <original>R</original>
    <variation>T</variation>
    <location>
        <position position="588"/>
    </location>
</feature>
<feature type="sequence conflict" description="In Ref. 1; BAA03005." evidence="14" ref="1">
    <original>F</original>
    <variation>Y</variation>
    <location>
        <position position="657"/>
    </location>
</feature>
<feature type="sequence conflict" description="In Ref. 1; BAA03005." evidence="14" ref="1">
    <original>LGIP</original>
    <variation>IGNS</variation>
    <location>
        <begin position="663"/>
        <end position="666"/>
    </location>
</feature>
<feature type="sequence conflict" description="In Ref. 1; BAA03005." evidence="14" ref="1">
    <original>G</original>
    <variation>W</variation>
    <location>
        <position position="696"/>
    </location>
</feature>
<feature type="sequence conflict" description="In Ref. 1; BAA03005." evidence="14" ref="1">
    <original>GQP</original>
    <variation>SA</variation>
    <location>
        <begin position="761"/>
        <end position="763"/>
    </location>
</feature>
<feature type="sequence conflict" description="In Ref. 1; BAA03005." evidence="14" ref="1">
    <original>A</original>
    <variation>S</variation>
    <location>
        <position position="822"/>
    </location>
</feature>
<feature type="sequence conflict" description="In Ref. 1; BAA03005." evidence="14" ref="1">
    <location>
        <position position="852"/>
    </location>
</feature>
<feature type="sequence conflict" description="In Ref. 1; BAA03005." evidence="14" ref="1">
    <original>G</original>
    <variation>R</variation>
    <location>
        <position position="1001"/>
    </location>
</feature>
<feature type="sequence conflict" description="In Ref. 1; BAA03005." evidence="14" ref="1">
    <original>P</original>
    <variation>A</variation>
    <location>
        <position position="1004"/>
    </location>
</feature>
<feature type="sequence conflict" description="In Ref. 1; BAA03003." evidence="14" ref="1">
    <original>SAMPFKILYD</original>
    <variation>PAILSKFFMMM</variation>
    <location>
        <begin position="1046"/>
        <end position="1055"/>
    </location>
</feature>
<feature type="sequence conflict" description="In Ref. 1; BAA03003." evidence="14" ref="1">
    <original>V</original>
    <variation>A</variation>
    <location>
        <position position="1084"/>
    </location>
</feature>
<feature type="sequence conflict" description="In Ref. 1; BAA03003." evidence="14" ref="1">
    <original>E</original>
    <variation>D</variation>
    <location>
        <position position="1298"/>
    </location>
</feature>
<feature type="sequence conflict" description="In Ref. 1; BAA03003." evidence="14" ref="1">
    <original>RS</original>
    <variation>E</variation>
    <location>
        <begin position="1447"/>
        <end position="1448"/>
    </location>
</feature>
<feature type="sequence conflict" description="In Ref. 1; BAA03003." evidence="14" ref="1">
    <original>ATYCVRTFALYK</original>
    <variation>HILCPDICTLN</variation>
    <location>
        <begin position="1491"/>
        <end position="1502"/>
    </location>
</feature>
<feature type="sequence conflict" description="In Ref. 1; BAA03003." evidence="14" ref="1">
    <original>E</original>
    <variation>K</variation>
    <location>
        <position position="1510"/>
    </location>
</feature>
<feature type="sequence conflict" description="In Ref. 1; BAA03003." evidence="14" ref="1">
    <original>FLAFLRRVKTCN</original>
    <variation>VPSFLTESQNLH</variation>
    <location>
        <begin position="1531"/>
        <end position="1542"/>
    </location>
</feature>
<feature type="sequence conflict" description="In Ref. 1; BAA03003." evidence="14" ref="1">
    <original>T</original>
    <variation>G</variation>
    <location>
        <position position="1684"/>
    </location>
</feature>
<feature type="sequence conflict" description="In Ref. 1; BAA03003." evidence="14" ref="1">
    <original>EFKVTDARDG</original>
    <variation>NSRSRMPGI</variation>
    <location>
        <begin position="1786"/>
        <end position="1795"/>
    </location>
</feature>
<feature type="strand" evidence="23">
    <location>
        <begin position="22"/>
        <end position="28"/>
    </location>
</feature>
<feature type="strand" evidence="23">
    <location>
        <begin position="33"/>
        <end position="36"/>
    </location>
</feature>
<feature type="strand" evidence="23">
    <location>
        <begin position="41"/>
        <end position="51"/>
    </location>
</feature>
<feature type="strand" evidence="23">
    <location>
        <begin position="54"/>
        <end position="59"/>
    </location>
</feature>
<feature type="strand" evidence="23">
    <location>
        <begin position="69"/>
        <end position="73"/>
    </location>
</feature>
<feature type="strand" evidence="23">
    <location>
        <begin position="75"/>
        <end position="84"/>
    </location>
</feature>
<feature type="turn" evidence="23">
    <location>
        <begin position="89"/>
        <end position="91"/>
    </location>
</feature>
<feature type="strand" evidence="23">
    <location>
        <begin position="94"/>
        <end position="101"/>
    </location>
</feature>
<feature type="strand" evidence="23">
    <location>
        <begin position="106"/>
        <end position="116"/>
    </location>
</feature>
<feature type="turn" evidence="23">
    <location>
        <begin position="118"/>
        <end position="120"/>
    </location>
</feature>
<feature type="strand" evidence="23">
    <location>
        <begin position="127"/>
        <end position="130"/>
    </location>
</feature>
<feature type="strand" evidence="23">
    <location>
        <begin position="135"/>
        <end position="138"/>
    </location>
</feature>
<feature type="strand" evidence="23">
    <location>
        <begin position="143"/>
        <end position="150"/>
    </location>
</feature>
<feature type="strand" evidence="23">
    <location>
        <begin position="156"/>
        <end position="161"/>
    </location>
</feature>
<feature type="strand" evidence="23">
    <location>
        <begin position="174"/>
        <end position="179"/>
    </location>
</feature>
<feature type="strand" evidence="23">
    <location>
        <begin position="184"/>
        <end position="186"/>
    </location>
</feature>
<feature type="strand" evidence="23">
    <location>
        <begin position="188"/>
        <end position="194"/>
    </location>
</feature>
<feature type="helix" evidence="23">
    <location>
        <begin position="199"/>
        <end position="201"/>
    </location>
</feature>
<feature type="strand" evidence="23">
    <location>
        <begin position="203"/>
        <end position="211"/>
    </location>
</feature>
<feature type="strand" evidence="23">
    <location>
        <begin position="214"/>
        <end position="217"/>
    </location>
</feature>
<feature type="strand" evidence="23">
    <location>
        <begin position="221"/>
        <end position="226"/>
    </location>
</feature>
<feature type="strand" evidence="22">
    <location>
        <begin position="234"/>
        <end position="240"/>
    </location>
</feature>
<feature type="strand" evidence="22">
    <location>
        <begin position="245"/>
        <end position="247"/>
    </location>
</feature>
<feature type="strand" evidence="22">
    <location>
        <begin position="252"/>
        <end position="263"/>
    </location>
</feature>
<feature type="strand" evidence="22">
    <location>
        <begin position="266"/>
        <end position="271"/>
    </location>
</feature>
<feature type="strand" evidence="22">
    <location>
        <begin position="274"/>
        <end position="277"/>
    </location>
</feature>
<feature type="strand" evidence="22">
    <location>
        <begin position="284"/>
        <end position="293"/>
    </location>
</feature>
<feature type="strand" evidence="22">
    <location>
        <begin position="298"/>
        <end position="306"/>
    </location>
</feature>
<feature type="strand" evidence="22">
    <location>
        <begin position="309"/>
        <end position="319"/>
    </location>
</feature>
<feature type="strand" evidence="21">
    <location>
        <begin position="330"/>
        <end position="334"/>
    </location>
</feature>
<feature type="strand" evidence="21">
    <location>
        <begin position="339"/>
        <end position="342"/>
    </location>
</feature>
<feature type="strand" evidence="21">
    <location>
        <begin position="353"/>
        <end position="360"/>
    </location>
</feature>
<feature type="strand" evidence="21">
    <location>
        <begin position="368"/>
        <end position="373"/>
    </location>
</feature>
<feature type="strand" evidence="21">
    <location>
        <begin position="375"/>
        <end position="380"/>
    </location>
</feature>
<feature type="strand" evidence="21">
    <location>
        <begin position="388"/>
        <end position="396"/>
    </location>
</feature>
<feature type="strand" evidence="21">
    <location>
        <begin position="401"/>
        <end position="404"/>
    </location>
</feature>
<feature type="strand" evidence="21">
    <location>
        <begin position="408"/>
        <end position="411"/>
    </location>
</feature>
<feature type="strand" evidence="21">
    <location>
        <begin position="422"/>
        <end position="432"/>
    </location>
</feature>
<feature type="strand" evidence="21">
    <location>
        <begin position="434"/>
        <end position="439"/>
    </location>
</feature>
<feature type="strand" evidence="21">
    <location>
        <begin position="450"/>
        <end position="457"/>
    </location>
</feature>
<feature type="helix" evidence="21">
    <location>
        <begin position="463"/>
        <end position="465"/>
    </location>
</feature>
<feature type="strand" evidence="21">
    <location>
        <begin position="466"/>
        <end position="473"/>
    </location>
</feature>
<feature type="strand" evidence="21">
    <location>
        <begin position="475"/>
        <end position="479"/>
    </location>
</feature>
<feature type="strand" evidence="21">
    <location>
        <begin position="487"/>
        <end position="495"/>
    </location>
</feature>
<feature type="strand" evidence="21">
    <location>
        <begin position="507"/>
        <end position="510"/>
    </location>
</feature>
<feature type="helix" evidence="24">
    <location>
        <begin position="1622"/>
        <end position="1624"/>
    </location>
</feature>
<feature type="helix" evidence="24">
    <location>
        <begin position="1625"/>
        <end position="1633"/>
    </location>
</feature>
<feature type="helix" evidence="24">
    <location>
        <begin position="1643"/>
        <end position="1650"/>
    </location>
</feature>
<feature type="turn" evidence="24">
    <location>
        <begin position="1651"/>
        <end position="1653"/>
    </location>
</feature>
<feature type="helix" evidence="24">
    <location>
        <begin position="1663"/>
        <end position="1665"/>
    </location>
</feature>
<feature type="helix" evidence="24">
    <location>
        <begin position="1667"/>
        <end position="1672"/>
    </location>
</feature>
<feature type="helix" evidence="24">
    <location>
        <begin position="1682"/>
        <end position="1684"/>
    </location>
</feature>
<feature type="turn" evidence="24">
    <location>
        <begin position="1695"/>
        <end position="1698"/>
    </location>
</feature>
<feature type="strand" evidence="24">
    <location>
        <begin position="1701"/>
        <end position="1705"/>
    </location>
</feature>
<feature type="strand" evidence="24">
    <location>
        <begin position="1708"/>
        <end position="1710"/>
    </location>
</feature>
<feature type="strand" evidence="24">
    <location>
        <begin position="1714"/>
        <end position="1718"/>
    </location>
</feature>
<feature type="helix" evidence="24">
    <location>
        <begin position="1722"/>
        <end position="1724"/>
    </location>
</feature>
<feature type="helix" evidence="24">
    <location>
        <begin position="1725"/>
        <end position="1734"/>
    </location>
</feature>
<feature type="strand" evidence="24">
    <location>
        <begin position="1739"/>
        <end position="1742"/>
    </location>
</feature>
<feature type="strand" evidence="24">
    <location>
        <begin position="1746"/>
        <end position="1748"/>
    </location>
</feature>
<feature type="strand" evidence="24">
    <location>
        <begin position="1751"/>
        <end position="1754"/>
    </location>
</feature>
<feature type="strand" evidence="24">
    <location>
        <begin position="1760"/>
        <end position="1762"/>
    </location>
</feature>
<feature type="strand" evidence="24">
    <location>
        <begin position="1764"/>
        <end position="1766"/>
    </location>
</feature>
<feature type="strand" evidence="24">
    <location>
        <begin position="1769"/>
        <end position="1779"/>
    </location>
</feature>
<feature type="strand" evidence="24">
    <location>
        <begin position="1782"/>
        <end position="1791"/>
    </location>
</feature>
<feature type="turn" evidence="24">
    <location>
        <begin position="1792"/>
        <end position="1794"/>
    </location>
</feature>
<feature type="strand" evidence="24">
    <location>
        <begin position="1797"/>
        <end position="1805"/>
    </location>
</feature>
<feature type="strand" evidence="24">
    <location>
        <begin position="1810"/>
        <end position="1812"/>
    </location>
</feature>
<feature type="helix" evidence="24">
    <location>
        <begin position="1818"/>
        <end position="1833"/>
    </location>
</feature>
<feature type="strand" evidence="24">
    <location>
        <begin position="1840"/>
        <end position="1849"/>
    </location>
</feature>
<feature type="helix" evidence="24">
    <location>
        <begin position="1850"/>
        <end position="1867"/>
    </location>
</feature>
<feature type="strand" evidence="24">
    <location>
        <begin position="1868"/>
        <end position="1870"/>
    </location>
</feature>
<feature type="helix" evidence="24">
    <location>
        <begin position="1872"/>
        <end position="1880"/>
    </location>
</feature>
<feature type="helix" evidence="24">
    <location>
        <begin position="1890"/>
        <end position="1904"/>
    </location>
</feature>
<feature type="helix" evidence="24">
    <location>
        <begin position="1908"/>
        <end position="1910"/>
    </location>
</feature>
<dbReference type="EC" id="3.1.3.48"/>
<dbReference type="EMBL" id="D13903">
    <property type="protein sequence ID" value="BAA03003.1"/>
    <property type="molecule type" value="mRNA"/>
</dbReference>
<dbReference type="EMBL" id="D13905">
    <property type="protein sequence ID" value="BAA03005.1"/>
    <property type="molecule type" value="mRNA"/>
</dbReference>
<dbReference type="EMBL" id="D13904">
    <property type="protein sequence ID" value="BAA03004.1"/>
    <property type="status" value="ALT_INIT"/>
    <property type="molecule type" value="mRNA"/>
</dbReference>
<dbReference type="EMBL" id="AF326559">
    <property type="protein sequence ID" value="AAL37405.1"/>
    <property type="molecule type" value="mRNA"/>
</dbReference>
<dbReference type="EMBL" id="AF326560">
    <property type="protein sequence ID" value="AAL37406.1"/>
    <property type="molecule type" value="mRNA"/>
</dbReference>
<dbReference type="EMBL" id="AL844848">
    <property type="status" value="NOT_ANNOTATED_CDS"/>
    <property type="molecule type" value="Genomic_DNA"/>
</dbReference>
<dbReference type="EMBL" id="AL845517">
    <property type="status" value="NOT_ANNOTATED_CDS"/>
    <property type="molecule type" value="Genomic_DNA"/>
</dbReference>
<dbReference type="EMBL" id="AL929181">
    <property type="status" value="NOT_ANNOTATED_CDS"/>
    <property type="molecule type" value="Genomic_DNA"/>
</dbReference>
<dbReference type="EMBL" id="Z23051">
    <property type="protein sequence ID" value="CAA80586.1"/>
    <property type="molecule type" value="mRNA"/>
</dbReference>
<dbReference type="PIR" id="C54689">
    <property type="entry name" value="C54689"/>
</dbReference>
<dbReference type="PIR" id="D54689">
    <property type="entry name" value="D54689"/>
</dbReference>
<dbReference type="RefSeq" id="NP_035341.2">
    <property type="nucleotide sequence ID" value="NM_011211.3"/>
</dbReference>
<dbReference type="PDB" id="4Y61">
    <property type="method" value="X-ray"/>
    <property type="resolution" value="3.36 A"/>
    <property type="chains" value="A=21-411"/>
</dbReference>
<dbReference type="PDB" id="4YFD">
    <property type="method" value="X-ray"/>
    <property type="resolution" value="3.25 A"/>
    <property type="chains" value="A=21-511"/>
</dbReference>
<dbReference type="PDB" id="4YFE">
    <property type="method" value="X-ray"/>
    <property type="resolution" value="1.97 A"/>
    <property type="chains" value="A/B=321-511"/>
</dbReference>
<dbReference type="PDB" id="4YFG">
    <property type="method" value="X-ray"/>
    <property type="resolution" value="3.49 A"/>
    <property type="chains" value="A/B=21-511"/>
</dbReference>
<dbReference type="PDB" id="4YH7">
    <property type="method" value="X-ray"/>
    <property type="resolution" value="4.40 A"/>
    <property type="chains" value="A=21-1265"/>
</dbReference>
<dbReference type="PDB" id="5XWT">
    <property type="method" value="X-ray"/>
    <property type="resolution" value="4.18 A"/>
    <property type="chains" value="A/C=20-410"/>
</dbReference>
<dbReference type="PDB" id="5XWU">
    <property type="method" value="X-ray"/>
    <property type="resolution" value="3.16 A"/>
    <property type="chains" value="A/C=20-321"/>
</dbReference>
<dbReference type="PDB" id="5Y32">
    <property type="method" value="X-ray"/>
    <property type="resolution" value="2.70 A"/>
    <property type="chains" value="A=21-318"/>
</dbReference>
<dbReference type="PDB" id="6KIP">
    <property type="method" value="X-ray"/>
    <property type="resolution" value="1.91 A"/>
    <property type="chains" value="A=1617-1912"/>
</dbReference>
<dbReference type="PDB" id="7CEG">
    <property type="method" value="X-ray"/>
    <property type="resolution" value="3.85 A"/>
    <property type="chains" value="A=21-411"/>
</dbReference>
<dbReference type="PDBsum" id="4Y61"/>
<dbReference type="PDBsum" id="4YFD"/>
<dbReference type="PDBsum" id="4YFE"/>
<dbReference type="PDBsum" id="4YFG"/>
<dbReference type="PDBsum" id="4YH7"/>
<dbReference type="PDBsum" id="5XWT"/>
<dbReference type="PDBsum" id="5XWU"/>
<dbReference type="PDBsum" id="5Y32"/>
<dbReference type="PDBsum" id="6KIP"/>
<dbReference type="PDBsum" id="7CEG"/>
<dbReference type="SMR" id="Q64487"/>
<dbReference type="BioGRID" id="202495">
    <property type="interactions" value="10"/>
</dbReference>
<dbReference type="FunCoup" id="Q64487">
    <property type="interactions" value="570"/>
</dbReference>
<dbReference type="IntAct" id="Q64487">
    <property type="interactions" value="4"/>
</dbReference>
<dbReference type="STRING" id="10090.ENSMUSP00000133468"/>
<dbReference type="GlyConnect" id="2445">
    <molecule id="Q64487-10"/>
    <property type="glycosylation" value="1 N-Linked glycan (1 site)"/>
</dbReference>
<dbReference type="GlyConnect" id="2667">
    <property type="glycosylation" value="6 N-Linked glycans (1 site)"/>
</dbReference>
<dbReference type="GlyCosmos" id="Q64487">
    <property type="glycosylation" value="4 sites, 6 glycans"/>
</dbReference>
<dbReference type="GlyGen" id="Q64487">
    <property type="glycosylation" value="4 sites, 8 N-linked glycans (2 sites)"/>
</dbReference>
<dbReference type="iPTMnet" id="Q64487"/>
<dbReference type="PhosphoSitePlus" id="Q64487"/>
<dbReference type="SwissPalm" id="Q64487"/>
<dbReference type="jPOST" id="Q64487"/>
<dbReference type="PeptideAtlas" id="Q64487"/>
<dbReference type="ProteomicsDB" id="301961">
    <molecule id="Q64487-4"/>
</dbReference>
<dbReference type="ProteomicsDB" id="301962">
    <molecule id="Q64487-1"/>
</dbReference>
<dbReference type="ProteomicsDB" id="301963">
    <molecule id="Q64487-2"/>
</dbReference>
<dbReference type="ProteomicsDB" id="301964">
    <molecule id="Q64487-3"/>
</dbReference>
<dbReference type="ProteomicsDB" id="301965">
    <molecule id="Q64487-5"/>
</dbReference>
<dbReference type="ProteomicsDB" id="301966">
    <molecule id="Q64487-6"/>
</dbReference>
<dbReference type="ProteomicsDB" id="301967">
    <molecule id="Q64487-7"/>
</dbReference>
<dbReference type="ProteomicsDB" id="301968">
    <molecule id="Q64487-8"/>
</dbReference>
<dbReference type="ProteomicsDB" id="301969">
    <molecule id="Q64487-9"/>
</dbReference>
<dbReference type="ProteomicsDB" id="301970">
    <molecule id="Q64487-10"/>
</dbReference>
<dbReference type="ProteomicsDB" id="301971">
    <molecule id="Q64487-11"/>
</dbReference>
<dbReference type="ProteomicsDB" id="301972">
    <molecule id="Q64487-12"/>
</dbReference>
<dbReference type="ABCD" id="Q64487">
    <property type="antibodies" value="1 sequenced antibody"/>
</dbReference>
<dbReference type="Antibodypedia" id="24342">
    <property type="antibodies" value="139 antibodies from 26 providers"/>
</dbReference>
<dbReference type="DNASU" id="19266"/>
<dbReference type="Ensembl" id="ENSMUST00000107289.9">
    <molecule id="Q64487-4"/>
    <property type="protein sequence ID" value="ENSMUSP00000102910.3"/>
    <property type="gene ID" value="ENSMUSG00000028399.19"/>
</dbReference>
<dbReference type="Ensembl" id="ENSMUST00000173376.9">
    <molecule id="Q64487-12"/>
    <property type="protein sequence ID" value="ENSMUSP00000133468.3"/>
    <property type="gene ID" value="ENSMUSG00000028399.19"/>
</dbReference>
<dbReference type="GeneID" id="19266"/>
<dbReference type="KEGG" id="mmu:19266"/>
<dbReference type="AGR" id="MGI:97812"/>
<dbReference type="CTD" id="5789"/>
<dbReference type="MGI" id="MGI:97812">
    <property type="gene designation" value="Ptprd"/>
</dbReference>
<dbReference type="VEuPathDB" id="HostDB:ENSMUSG00000028399"/>
<dbReference type="eggNOG" id="KOG4228">
    <property type="taxonomic scope" value="Eukaryota"/>
</dbReference>
<dbReference type="GeneTree" id="ENSGT00940000153617"/>
<dbReference type="InParanoid" id="Q64487"/>
<dbReference type="OMA" id="QWTISGI"/>
<dbReference type="OrthoDB" id="10253954at2759"/>
<dbReference type="PhylomeDB" id="Q64487"/>
<dbReference type="Reactome" id="R-MMU-388844">
    <property type="pathway name" value="Receptor-type tyrosine-protein phosphatases"/>
</dbReference>
<dbReference type="Reactome" id="R-MMU-8849932">
    <property type="pathway name" value="Synaptic adhesion-like molecules"/>
</dbReference>
<dbReference type="BioGRID-ORCS" id="19266">
    <property type="hits" value="0 hits in 28 CRISPR screens"/>
</dbReference>
<dbReference type="CD-CODE" id="CE726F99">
    <property type="entry name" value="Postsynaptic density"/>
</dbReference>
<dbReference type="ChiTaRS" id="Ptprd">
    <property type="organism name" value="mouse"/>
</dbReference>
<dbReference type="EvolutionaryTrace" id="Q64487"/>
<dbReference type="PRO" id="PR:Q64487"/>
<dbReference type="Proteomes" id="UP000000589">
    <property type="component" value="Chromosome 4"/>
</dbReference>
<dbReference type="RNAct" id="Q64487">
    <property type="molecule type" value="protein"/>
</dbReference>
<dbReference type="Bgee" id="ENSMUSG00000028399">
    <property type="expression patterns" value="Expressed in saccule of membranous labyrinth and 275 other cell types or tissues"/>
</dbReference>
<dbReference type="ExpressionAtlas" id="Q64487">
    <property type="expression patterns" value="baseline and differential"/>
</dbReference>
<dbReference type="GO" id="GO:0098978">
    <property type="term" value="C:glutamatergic synapse"/>
    <property type="evidence" value="ECO:0000314"/>
    <property type="project" value="SynGO"/>
</dbReference>
<dbReference type="GO" id="GO:0098686">
    <property type="term" value="C:hippocampal mossy fiber to CA3 synapse"/>
    <property type="evidence" value="ECO:0000314"/>
    <property type="project" value="SynGO"/>
</dbReference>
<dbReference type="GO" id="GO:0042734">
    <property type="term" value="C:presynaptic membrane"/>
    <property type="evidence" value="ECO:0000314"/>
    <property type="project" value="SynGO"/>
</dbReference>
<dbReference type="GO" id="GO:0098685">
    <property type="term" value="C:Schaffer collateral - CA1 synapse"/>
    <property type="evidence" value="ECO:0000314"/>
    <property type="project" value="SynGO"/>
</dbReference>
<dbReference type="GO" id="GO:0050839">
    <property type="term" value="F:cell adhesion molecule binding"/>
    <property type="evidence" value="ECO:0000353"/>
    <property type="project" value="BHF-UCL"/>
</dbReference>
<dbReference type="GO" id="GO:0004725">
    <property type="term" value="F:protein tyrosine phosphatase activity"/>
    <property type="evidence" value="ECO:0007669"/>
    <property type="project" value="UniProtKB-EC"/>
</dbReference>
<dbReference type="GO" id="GO:0005102">
    <property type="term" value="F:signaling receptor binding"/>
    <property type="evidence" value="ECO:0000353"/>
    <property type="project" value="BHF-UCL"/>
</dbReference>
<dbReference type="GO" id="GO:0007157">
    <property type="term" value="P:heterophilic cell-cell adhesion via plasma membrane cell adhesion molecules"/>
    <property type="evidence" value="ECO:0000314"/>
    <property type="project" value="CACAO"/>
</dbReference>
<dbReference type="GO" id="GO:0050804">
    <property type="term" value="P:modulation of chemical synaptic transmission"/>
    <property type="evidence" value="ECO:0000314"/>
    <property type="project" value="SynGO"/>
</dbReference>
<dbReference type="GO" id="GO:0046426">
    <property type="term" value="P:negative regulation of receptor signaling pathway via JAK-STAT"/>
    <property type="evidence" value="ECO:0000315"/>
    <property type="project" value="MGI"/>
</dbReference>
<dbReference type="GO" id="GO:0030182">
    <property type="term" value="P:neuron differentiation"/>
    <property type="evidence" value="ECO:0000314"/>
    <property type="project" value="BHF-UCL"/>
</dbReference>
<dbReference type="GO" id="GO:0050775">
    <property type="term" value="P:positive regulation of dendrite morphogenesis"/>
    <property type="evidence" value="ECO:0000315"/>
    <property type="project" value="CACAO"/>
</dbReference>
<dbReference type="GO" id="GO:0061003">
    <property type="term" value="P:positive regulation of dendritic spine morphogenesis"/>
    <property type="evidence" value="ECO:0000314"/>
    <property type="project" value="BHF-UCL"/>
</dbReference>
<dbReference type="GO" id="GO:0051965">
    <property type="term" value="P:positive regulation of synapse assembly"/>
    <property type="evidence" value="ECO:0000314"/>
    <property type="project" value="UniProtKB"/>
</dbReference>
<dbReference type="GO" id="GO:0097105">
    <property type="term" value="P:presynaptic membrane assembly"/>
    <property type="evidence" value="ECO:0000314"/>
    <property type="project" value="BHF-UCL"/>
</dbReference>
<dbReference type="GO" id="GO:0050776">
    <property type="term" value="P:regulation of immune response"/>
    <property type="evidence" value="ECO:0000315"/>
    <property type="project" value="MGI"/>
</dbReference>
<dbReference type="GO" id="GO:0099151">
    <property type="term" value="P:regulation of postsynaptic density assembly"/>
    <property type="evidence" value="ECO:0000314"/>
    <property type="project" value="SynGO"/>
</dbReference>
<dbReference type="GO" id="GO:0099560">
    <property type="term" value="P:synaptic membrane adhesion"/>
    <property type="evidence" value="ECO:0000314"/>
    <property type="project" value="BHF-UCL"/>
</dbReference>
<dbReference type="GO" id="GO:0099537">
    <property type="term" value="P:trans-synaptic signaling"/>
    <property type="evidence" value="ECO:0000314"/>
    <property type="project" value="SynGO"/>
</dbReference>
<dbReference type="GO" id="GO:0099545">
    <property type="term" value="P:trans-synaptic signaling by trans-synaptic complex"/>
    <property type="evidence" value="ECO:0007669"/>
    <property type="project" value="Ensembl"/>
</dbReference>
<dbReference type="CDD" id="cd00063">
    <property type="entry name" value="FN3"/>
    <property type="match status" value="8"/>
</dbReference>
<dbReference type="CDD" id="cd05738">
    <property type="entry name" value="IgI_2_RPTP_IIa_LAR_like"/>
    <property type="match status" value="1"/>
</dbReference>
<dbReference type="CDD" id="cd05739">
    <property type="entry name" value="IgI_3_RPTP_IIa_LAR_like"/>
    <property type="match status" value="1"/>
</dbReference>
<dbReference type="CDD" id="cd14628">
    <property type="entry name" value="R-PTP-D-2"/>
    <property type="match status" value="1"/>
</dbReference>
<dbReference type="CDD" id="cd14624">
    <property type="entry name" value="R-PTPc-D-1"/>
    <property type="match status" value="1"/>
</dbReference>
<dbReference type="DisProt" id="DP02517">
    <molecule id="Q64487-12"/>
</dbReference>
<dbReference type="FunFam" id="2.60.40.10:FF:000010">
    <property type="entry name" value="receptor-type tyrosine-protein phosphatase delta isoform X1"/>
    <property type="match status" value="1"/>
</dbReference>
<dbReference type="FunFam" id="2.60.40.10:FF:000027">
    <property type="entry name" value="receptor-type tyrosine-protein phosphatase delta isoform X1"/>
    <property type="match status" value="1"/>
</dbReference>
<dbReference type="FunFam" id="2.60.40.10:FF:000036">
    <property type="entry name" value="receptor-type tyrosine-protein phosphatase delta isoform X1"/>
    <property type="match status" value="1"/>
</dbReference>
<dbReference type="FunFam" id="2.60.40.10:FF:000066">
    <property type="entry name" value="receptor-type tyrosine-protein phosphatase delta isoform X1"/>
    <property type="match status" value="1"/>
</dbReference>
<dbReference type="FunFam" id="2.60.40.10:FF:000068">
    <property type="entry name" value="receptor-type tyrosine-protein phosphatase delta isoform X1"/>
    <property type="match status" value="1"/>
</dbReference>
<dbReference type="FunFam" id="2.60.40.10:FF:000015">
    <property type="entry name" value="receptor-type tyrosine-protein phosphatase delta isoform X2"/>
    <property type="match status" value="1"/>
</dbReference>
<dbReference type="FunFam" id="2.60.40.10:FF:000023">
    <property type="entry name" value="receptor-type tyrosine-protein phosphatase delta isoform X2"/>
    <property type="match status" value="1"/>
</dbReference>
<dbReference type="FunFam" id="2.60.40.10:FF:000082">
    <property type="entry name" value="receptor-type tyrosine-protein phosphatase delta isoform X2"/>
    <property type="match status" value="1"/>
</dbReference>
<dbReference type="FunFam" id="2.60.40.10:FF:000128">
    <property type="entry name" value="receptor-type tyrosine-protein phosphatase delta isoform X2"/>
    <property type="match status" value="1"/>
</dbReference>
<dbReference type="FunFam" id="3.90.190.10:FF:000002">
    <property type="entry name" value="receptor-type tyrosine-protein phosphatase delta isoform X2"/>
    <property type="match status" value="1"/>
</dbReference>
<dbReference type="FunFam" id="2.60.40.10:FF:000181">
    <property type="entry name" value="receptor-type tyrosine-protein phosphatase delta isoform X4"/>
    <property type="match status" value="1"/>
</dbReference>
<dbReference type="FunFam" id="3.90.190.10:FF:000001">
    <property type="entry name" value="Receptor-type tyrosine-protein phosphatase F isoform A"/>
    <property type="match status" value="1"/>
</dbReference>
<dbReference type="FunFam" id="2.60.40.10:FF:000098">
    <property type="entry name" value="receptor-type tyrosine-protein phosphatase F isoform X1"/>
    <property type="match status" value="1"/>
</dbReference>
<dbReference type="Gene3D" id="2.60.40.10">
    <property type="entry name" value="Immunoglobulins"/>
    <property type="match status" value="11"/>
</dbReference>
<dbReference type="Gene3D" id="3.90.190.10">
    <property type="entry name" value="Protein tyrosine phosphatase superfamily"/>
    <property type="match status" value="2"/>
</dbReference>
<dbReference type="InterPro" id="IPR003961">
    <property type="entry name" value="FN3_dom"/>
</dbReference>
<dbReference type="InterPro" id="IPR036116">
    <property type="entry name" value="FN3_sf"/>
</dbReference>
<dbReference type="InterPro" id="IPR007110">
    <property type="entry name" value="Ig-like_dom"/>
</dbReference>
<dbReference type="InterPro" id="IPR036179">
    <property type="entry name" value="Ig-like_dom_sf"/>
</dbReference>
<dbReference type="InterPro" id="IPR013783">
    <property type="entry name" value="Ig-like_fold"/>
</dbReference>
<dbReference type="InterPro" id="IPR013098">
    <property type="entry name" value="Ig_I-set"/>
</dbReference>
<dbReference type="InterPro" id="IPR003599">
    <property type="entry name" value="Ig_sub"/>
</dbReference>
<dbReference type="InterPro" id="IPR003598">
    <property type="entry name" value="Ig_sub2"/>
</dbReference>
<dbReference type="InterPro" id="IPR029021">
    <property type="entry name" value="Prot-tyrosine_phosphatase-like"/>
</dbReference>
<dbReference type="InterPro" id="IPR000242">
    <property type="entry name" value="PTP_cat"/>
</dbReference>
<dbReference type="InterPro" id="IPR045905">
    <property type="entry name" value="R-PTP-delta_cat"/>
</dbReference>
<dbReference type="InterPro" id="IPR050713">
    <property type="entry name" value="RTP_Phos/Ushers"/>
</dbReference>
<dbReference type="InterPro" id="IPR016130">
    <property type="entry name" value="Tyr_Pase_AS"/>
</dbReference>
<dbReference type="InterPro" id="IPR003595">
    <property type="entry name" value="Tyr_Pase_cat"/>
</dbReference>
<dbReference type="InterPro" id="IPR000387">
    <property type="entry name" value="Tyr_Pase_dom"/>
</dbReference>
<dbReference type="PANTHER" id="PTHR46957">
    <property type="entry name" value="CYTOKINE RECEPTOR"/>
    <property type="match status" value="1"/>
</dbReference>
<dbReference type="PANTHER" id="PTHR46957:SF11">
    <property type="entry name" value="PROTEIN-TYROSINE-PHOSPHATASE"/>
    <property type="match status" value="1"/>
</dbReference>
<dbReference type="Pfam" id="PF00041">
    <property type="entry name" value="fn3"/>
    <property type="match status" value="7"/>
</dbReference>
<dbReference type="Pfam" id="PF07679">
    <property type="entry name" value="I-set"/>
    <property type="match status" value="2"/>
</dbReference>
<dbReference type="Pfam" id="PF13927">
    <property type="entry name" value="Ig_3"/>
    <property type="match status" value="1"/>
</dbReference>
<dbReference type="Pfam" id="PF00102">
    <property type="entry name" value="Y_phosphatase"/>
    <property type="match status" value="2"/>
</dbReference>
<dbReference type="PRINTS" id="PR00014">
    <property type="entry name" value="FNTYPEIII"/>
</dbReference>
<dbReference type="PRINTS" id="PR00700">
    <property type="entry name" value="PRTYPHPHTASE"/>
</dbReference>
<dbReference type="SMART" id="SM00060">
    <property type="entry name" value="FN3"/>
    <property type="match status" value="8"/>
</dbReference>
<dbReference type="SMART" id="SM00409">
    <property type="entry name" value="IG"/>
    <property type="match status" value="4"/>
</dbReference>
<dbReference type="SMART" id="SM00408">
    <property type="entry name" value="IGc2"/>
    <property type="match status" value="3"/>
</dbReference>
<dbReference type="SMART" id="SM00194">
    <property type="entry name" value="PTPc"/>
    <property type="match status" value="2"/>
</dbReference>
<dbReference type="SMART" id="SM00404">
    <property type="entry name" value="PTPc_motif"/>
    <property type="match status" value="2"/>
</dbReference>
<dbReference type="SUPFAM" id="SSF52799">
    <property type="entry name" value="(Phosphotyrosine protein) phosphatases II"/>
    <property type="match status" value="2"/>
</dbReference>
<dbReference type="SUPFAM" id="SSF49265">
    <property type="entry name" value="Fibronectin type III"/>
    <property type="match status" value="5"/>
</dbReference>
<dbReference type="SUPFAM" id="SSF48726">
    <property type="entry name" value="Immunoglobulin"/>
    <property type="match status" value="3"/>
</dbReference>
<dbReference type="PROSITE" id="PS50853">
    <property type="entry name" value="FN3"/>
    <property type="match status" value="8"/>
</dbReference>
<dbReference type="PROSITE" id="PS50835">
    <property type="entry name" value="IG_LIKE"/>
    <property type="match status" value="3"/>
</dbReference>
<dbReference type="PROSITE" id="PS00383">
    <property type="entry name" value="TYR_PHOSPHATASE_1"/>
    <property type="match status" value="2"/>
</dbReference>
<dbReference type="PROSITE" id="PS50056">
    <property type="entry name" value="TYR_PHOSPHATASE_2"/>
    <property type="match status" value="2"/>
</dbReference>
<dbReference type="PROSITE" id="PS50055">
    <property type="entry name" value="TYR_PHOSPHATASE_PTP"/>
    <property type="match status" value="2"/>
</dbReference>
<comment type="function">
    <text evidence="10 11">Can bidirectionally induce pre- and post-synaptic differentiation of neurons by mediating interaction with IL1RAP and IL1RAPL1 trans-synaptically (PubMed:25908590). Involved in pre-synaptic differentiation through interaction with SLITRK2 (PubMed:25989451).</text>
</comment>
<comment type="catalytic activity">
    <reaction evidence="7">
        <text>O-phospho-L-tyrosyl-[protein] + H2O = L-tyrosyl-[protein] + phosphate</text>
        <dbReference type="Rhea" id="RHEA:10684"/>
        <dbReference type="Rhea" id="RHEA-COMP:10136"/>
        <dbReference type="Rhea" id="RHEA-COMP:20101"/>
        <dbReference type="ChEBI" id="CHEBI:15377"/>
        <dbReference type="ChEBI" id="CHEBI:43474"/>
        <dbReference type="ChEBI" id="CHEBI:46858"/>
        <dbReference type="ChEBI" id="CHEBI:61978"/>
        <dbReference type="EC" id="3.1.3.48"/>
    </reaction>
</comment>
<comment type="subunit">
    <text evidence="2 9 10 11">Interacts with PPFIA1, PPFIA2 and PPFIA3 (By similarity). Interacts (via extracellular domain) with SLITRK4 (via LRR 1 and 2 repeats) (PubMed:25989451). Interacts with SLITRK2; induces presynaptic differentiation (PubMed:25989451). Interacts (via the second immunoglobilin domain) with IL1RAPL1 (via the first immunoglobilin domain); induces pre- and postsynaptic differentiation of neurons and synapse formation. Isoform G, isoform H, isoform I, isoform J, and isoform K do not interact with IL1RAPL1 (PubMed:21940441, PubMed:25908590). Interacts (via the third immunoglobilin domain) with IL1RAP (via the first immunoglobilin domain); induces pre- and postsynaptic differentiation of neurons (PubMed:25908590).</text>
</comment>
<comment type="interaction">
    <interactant intactId="EBI-771834">
        <id>Q64487</id>
    </interactant>
    <interactant intactId="EBI-5452114">
        <id>P59823</id>
        <label>Il1rapl1</label>
    </interactant>
    <organismsDiffer>false</organismsDiffer>
    <experiments>6</experiments>
</comment>
<comment type="subcellular location">
    <subcellularLocation>
        <location>Membrane</location>
        <topology>Single-pass type I membrane protein</topology>
    </subcellularLocation>
</comment>
<comment type="alternative products">
    <event type="alternative splicing"/>
    <isoform>
        <id>Q64487-4</id>
        <name>D</name>
        <name>delta</name>
        <sequence type="displayed"/>
    </isoform>
    <isoform>
        <id>Q64487-1</id>
        <name>C</name>
        <sequence type="described" ref="VSP_043549 VSP_043550 VSP_043552"/>
    </isoform>
    <isoform>
        <id>Q64487-2</id>
        <name>A</name>
        <sequence type="described" ref="VSP_043545 VSP_043546 VSP_043551 VSP_043553"/>
    </isoform>
    <isoform>
        <id>Q64487-3</id>
        <name>B</name>
        <sequence type="described" ref="VSP_043545 VSP_043546 VSP_043552"/>
    </isoform>
    <isoform>
        <id>Q64487-5</id>
        <name>E</name>
        <name>delta-DelB</name>
        <sequence type="described" ref="VSP_043550"/>
    </isoform>
    <isoform>
        <id>Q64487-6</id>
        <name>F</name>
        <name>deltaA6</name>
        <sequence type="described" ref="VSP_043548"/>
    </isoform>
    <isoform>
        <id>Q64487-7</id>
        <name>G</name>
        <name>deltaA6-DelB</name>
        <sequence type="described" ref="VSP_043548 VSP_043550"/>
    </isoform>
    <isoform>
        <id>Q64487-8</id>
        <name>H</name>
        <name>deltaA3</name>
        <sequence type="described" ref="VSP_043549"/>
    </isoform>
    <isoform>
        <id>Q64487-9</id>
        <name>I</name>
        <name>deltaA3-DelB</name>
        <sequence type="described" ref="VSP_043549 VSP_043550"/>
    </isoform>
    <isoform>
        <id>Q64487-10</id>
        <name>J</name>
        <name>delta-DelA</name>
        <sequence type="described" ref="VSP_043547"/>
    </isoform>
    <isoform>
        <id>Q64487-11</id>
        <name>K</name>
        <name>delta-DelAB</name>
        <sequence type="described" ref="VSP_043547 VSP_043550"/>
    </isoform>
    <isoform>
        <id>Q64487-12</id>
        <name>L</name>
        <name>delta A</name>
        <sequence type="described" ref="VSP_043551 VSP_043553"/>
    </isoform>
    <text>Additional isoforms seem to exist.</text>
</comment>
<comment type="tissue specificity">
    <text>Brain, kidney, heart, and some B-cell lines.</text>
</comment>
<comment type="PTM">
    <text evidence="1">A cleavage occurs, separating the extracellular domain from the transmembrane segment. This process called 'ectodomain shedding' is thought to be involved in receptor desensitization, signal transduction and/or membrane localization (By similarity).</text>
</comment>
<comment type="similarity">
    <text evidence="14">Belongs to the protein-tyrosine phosphatase family. Receptor class 2A subfamily.</text>
</comment>
<comment type="sequence caution" evidence="14">
    <conflict type="erroneous initiation">
        <sequence resource="EMBL-CDS" id="BAA03004"/>
    </conflict>
    <text>Extended N-terminus.</text>
</comment>